<organism evidence="7">
    <name type="scientific">Pichia angusta</name>
    <name type="common">Yeast</name>
    <name type="synonym">Hansenula polymorpha</name>
    <dbReference type="NCBI Taxonomy" id="870730"/>
    <lineage>
        <taxon>Eukaryota</taxon>
        <taxon>Fungi</taxon>
        <taxon>Dikarya</taxon>
        <taxon>Ascomycota</taxon>
        <taxon>Saccharomycotina</taxon>
        <taxon>Pichiomycetes</taxon>
        <taxon>Pichiales</taxon>
        <taxon>Pichiaceae</taxon>
        <taxon>Ogataea</taxon>
    </lineage>
</organism>
<accession>C0HK58</accession>
<evidence type="ECO:0000250" key="1">
    <source>
        <dbReference type="UniProtKB" id="P05626"/>
    </source>
</evidence>
<evidence type="ECO:0000250" key="2">
    <source>
        <dbReference type="UniProtKB" id="Q6C105"/>
    </source>
</evidence>
<evidence type="ECO:0000255" key="3"/>
<evidence type="ECO:0000269" key="4">
    <source>
    </source>
</evidence>
<evidence type="ECO:0000269" key="5">
    <source>
    </source>
</evidence>
<evidence type="ECO:0000269" key="6">
    <source ref="1"/>
</evidence>
<evidence type="ECO:0000303" key="7">
    <source>
    </source>
</evidence>
<evidence type="ECO:0000303" key="8">
    <source ref="1"/>
</evidence>
<evidence type="ECO:0000305" key="9"/>
<evidence type="ECO:0000305" key="10">
    <source>
    </source>
</evidence>
<evidence type="ECO:0007744" key="11">
    <source>
        <dbReference type="PDB" id="5LQX"/>
    </source>
</evidence>
<evidence type="ECO:0007744" key="12">
    <source>
        <dbReference type="PDB" id="5LQY"/>
    </source>
</evidence>
<evidence type="ECO:0007744" key="13">
    <source>
        <dbReference type="PDB" id="5LQZ"/>
    </source>
</evidence>
<proteinExistence type="evidence at protein level"/>
<comment type="function">
    <text evidence="2 4 5">Mitochondrial membrane ATP synthase (F(1)F(0) ATP synthase or Complex V) produces ATP from ADP in the presence of a proton gradient across the membrane which is generated by electron transport complexes of the respiratory chain (PubMed:25759169). F-type ATP synthases consist of two structural domains, F(1) - containing the extramembraneous catalytic core, and F(0) - containing the membrane proton channel, linked together by a central stalk and a peripheral stalk (PubMed:27791192). During catalysis, ATP synthesis in the catalytic domain of F(1) is coupled via a rotary mechanism of the central stalk subunits to proton translocation (By similarity). Part of the complex F(0) domain and the peripheral stalk, which acts as a stator to hold the catalytic alpha/ATP1(3)beta/ATP2(3) subcomplex and subunit a/ATP6 static relative to the rotary elements (PubMed:27791192).</text>
</comment>
<comment type="subunit">
    <text evidence="2 4 5">F-type ATP synthases have 2 components, the catalytic core F(1) and the membrane-embedded component F(0), linked together by a central stalk and a peripheral stalk (PubMed:27791192). The central stalk, also called rotor shaft, is often seen as part of F(1) (PubMed:27791192). The peripheral stalk is seen as part of F(0). F(0) contains the membrane channel next to the rotor (PubMed:27791192). F-type ATP synthases form dimers but each monomer functions independently in ATP generation (By similarity). The dimer consists of 18 different polypeptides: ATP1 (subunit alpha, part of F(1), 3 molecules per monomer), ATP2 (subunit beta, part of F(1), 3 molecules per monomer), ATP3 (subunit gamma, part of the central stalk), ATP4 (subunit b, part of the peripheral stalk), ATP5/OSCP (subunit 5/OSCP, part of the peripheral stalk), ATP6 (subunit a, part of the peripheral stalk), ATP7 (subunit d, part of the peripheral stalk), ATP8 (subunit 8, part of the peripheral stalk), OLI1 (subunit c, part of the rotor, 10 molecules per monomer), ATP14 (subunit h, part of the peripheral stalk), ATP15 (subunit epsilon, part of the central stalk), ATP16 (subunit delta, part of the central stalk), ATP17 (subunit f, part of the peripheral stalk), ATP18 (subunit i/j, part of the peripheral stalk) (PubMed:25759169, PubMed:27791192). Dimer-specific subunits are ATP19 (subunit k, at interface between monomers), ATP20 (subunit g, at interface between monomers), TIM11 (subunit e, at interface between monomers) (By similarity). Also contains subunit L (PubMed:25759169).</text>
</comment>
<comment type="subcellular location">
    <subcellularLocation>
        <location evidence="10">Mitochondrion inner membrane</location>
        <topology evidence="10">Multi-pass membrane protein</topology>
    </subcellularLocation>
    <text evidence="10">The F-type ATP synthase complex is anchored in the mitochondrial inner membrane via the F(0) domain with the F(1) domain and the peripheral stalk extending into the mitochondrial matrix.</text>
</comment>
<comment type="mass spectrometry" mass="22267.0" method="MALDI" evidence="4"/>
<comment type="similarity">
    <text evidence="9">Belongs to the eukaryotic ATPase B chain family.</text>
</comment>
<reference evidence="9" key="1">
    <citation type="submission" date="2016-08" db="UniProtKB">
        <authorList>
            <person name="Fearnley I.M."/>
        </authorList>
    </citation>
    <scope>PARTIAL PROTEIN SEQUENCE</scope>
    <source>
        <strain evidence="8">A16 / NCYC 2310</strain>
    </source>
</reference>
<reference evidence="9" key="2">
    <citation type="journal article" date="2015" name="Biochem. J.">
        <title>The purification and characterization of ATP synthase complexes from the mitochondria of four fungal species.</title>
        <authorList>
            <person name="Liu S."/>
            <person name="Charlesworth T.J."/>
            <person name="Bason J.V."/>
            <person name="Montgomery M.G."/>
            <person name="Harbour M.E."/>
            <person name="Fearnley I.M."/>
            <person name="Walker J.E."/>
        </authorList>
    </citation>
    <scope>IDENTIFICATION IN ATP SYNTHASE COMPLEX</scope>
    <scope>FUNCTION OF ATPASE COMPLEX</scope>
    <scope>SUBUNIT</scope>
    <scope>SUBCELLULAR LOCATION</scope>
    <scope>MASS SPECTROMETRY</scope>
    <scope>IDENTIFICATION BY MASS SPECTROMETRY</scope>
    <source>
        <strain evidence="7">A16 / NCYC 2310</strain>
    </source>
</reference>
<reference evidence="11 12 13" key="3">
    <citation type="journal article" date="2016" name="Proc. Natl. Acad. Sci. U.S.A.">
        <title>Structure of the mitochondrial ATP synthase from Pichia angusta determined by electron cryo-microscopy.</title>
        <authorList>
            <person name="Vinothkumar K.R."/>
            <person name="Montgomery M.G."/>
            <person name="Liu S."/>
            <person name="Walker J.E."/>
        </authorList>
    </citation>
    <scope>STRUCTURE BY ELECTRON MICROSCOPY (7.0 ANGSTROMS) OF MONOMERIC ATP SYNTHASE COMPLEX IN COMPLEX WITH BOVINE ATPIF1</scope>
    <scope>FUNCTION</scope>
    <scope>SUBUNIT</scope>
    <scope>SUBCELLULAR LOCATION</scope>
</reference>
<protein>
    <recommendedName>
        <fullName evidence="1">ATP synthase subunit 4, mitochondrial</fullName>
    </recommendedName>
    <alternativeName>
        <fullName evidence="7">ATP synthase subunit b</fullName>
    </alternativeName>
</protein>
<sequence length="204" mass="22266">STPVDPKTKANALIDSLPGNSFLSKTGILATTAAASVYAISSELYVVNDESILLVTFLGFIALISKTVAPLYGEMAKNRTDHVVGLLNQARADHVNAVKTRIDQVSNLKDVVSTTKALFEMSKETAALEAEAFELKQKVAVASEAKSVLDSWVRYEAQVRQHEQEQLASTVISKVQSELQNAKFQDKVLAQAVEEVERLFAKEK</sequence>
<gene>
    <name evidence="1" type="primary">ATP4</name>
</gene>
<dbReference type="PDB" id="5LQX">
    <property type="method" value="EM"/>
    <property type="resolution" value="7.90 A"/>
    <property type="chains" value="V=1-204"/>
</dbReference>
<dbReference type="PDB" id="5LQY">
    <property type="method" value="EM"/>
    <property type="resolution" value="7.80 A"/>
    <property type="chains" value="V=1-204"/>
</dbReference>
<dbReference type="PDB" id="5LQZ">
    <property type="method" value="EM"/>
    <property type="resolution" value="7.00 A"/>
    <property type="chains" value="V=1-204"/>
</dbReference>
<dbReference type="PDBsum" id="5LQX"/>
<dbReference type="PDBsum" id="5LQY"/>
<dbReference type="PDBsum" id="5LQZ"/>
<dbReference type="EMDB" id="EMD-4100"/>
<dbReference type="EMDB" id="EMD-4101"/>
<dbReference type="EMDB" id="EMD-4102"/>
<dbReference type="SMR" id="C0HK58"/>
<dbReference type="GO" id="GO:0005743">
    <property type="term" value="C:mitochondrial inner membrane"/>
    <property type="evidence" value="ECO:0007669"/>
    <property type="project" value="UniProtKB-SubCell"/>
</dbReference>
<dbReference type="GO" id="GO:0045259">
    <property type="term" value="C:proton-transporting ATP synthase complex"/>
    <property type="evidence" value="ECO:0007669"/>
    <property type="project" value="UniProtKB-KW"/>
</dbReference>
<dbReference type="GO" id="GO:0046933">
    <property type="term" value="F:proton-transporting ATP synthase activity, rotational mechanism"/>
    <property type="evidence" value="ECO:0007669"/>
    <property type="project" value="TreeGrafter"/>
</dbReference>
<dbReference type="FunFam" id="1.20.5.2210:FF:000002">
    <property type="entry name" value="ATP synthase subunit 4 mitochondrial"/>
    <property type="match status" value="1"/>
</dbReference>
<dbReference type="Gene3D" id="1.20.5.2210">
    <property type="match status" value="1"/>
</dbReference>
<dbReference type="InterPro" id="IPR008688">
    <property type="entry name" value="ATP_synth_Bsub_B/MI25"/>
</dbReference>
<dbReference type="InterPro" id="IPR013837">
    <property type="entry name" value="ATP_synth_F0_suB"/>
</dbReference>
<dbReference type="PANTHER" id="PTHR12733:SF3">
    <property type="entry name" value="ATP SYNTHASE F(0) COMPLEX SUBUNIT B1, MITOCHONDRIAL"/>
    <property type="match status" value="1"/>
</dbReference>
<dbReference type="PANTHER" id="PTHR12733">
    <property type="entry name" value="MITOCHONDRIAL ATP SYNTHASE B CHAIN"/>
    <property type="match status" value="1"/>
</dbReference>
<dbReference type="Pfam" id="PF05405">
    <property type="entry name" value="Mt_ATP-synt_B"/>
    <property type="match status" value="1"/>
</dbReference>
<dbReference type="SUPFAM" id="SSF161060">
    <property type="entry name" value="ATP synthase B chain-like"/>
    <property type="match status" value="1"/>
</dbReference>
<keyword id="KW-0002">3D-structure</keyword>
<keyword id="KW-0066">ATP synthesis</keyword>
<keyword id="KW-0138">CF(0)</keyword>
<keyword id="KW-0903">Direct protein sequencing</keyword>
<keyword id="KW-0375">Hydrogen ion transport</keyword>
<keyword id="KW-0406">Ion transport</keyword>
<keyword id="KW-0472">Membrane</keyword>
<keyword id="KW-0496">Mitochondrion</keyword>
<keyword id="KW-0999">Mitochondrion inner membrane</keyword>
<keyword id="KW-0812">Transmembrane</keyword>
<keyword id="KW-1133">Transmembrane helix</keyword>
<keyword id="KW-0813">Transport</keyword>
<name>ATPF_PICAN</name>
<feature type="chain" id="PRO_0000445315" description="ATP synthase subunit 4, mitochondrial" evidence="6">
    <location>
        <begin position="1"/>
        <end position="204"/>
    </location>
</feature>
<feature type="transmembrane region" description="Helical" evidence="3">
    <location>
        <begin position="27"/>
        <end position="47"/>
    </location>
</feature>
<feature type="transmembrane region" description="Helical" evidence="3">
    <location>
        <begin position="52"/>
        <end position="72"/>
    </location>
</feature>